<sequence length="549" mass="59642">MARDATKLEATVAKLKKHWAESAPRDMRAAFSADPGRFGRYSLCLDDLLFDWSKCRVNDETMALLKELAVAADVEGRRAAMFAGEHINNTEDRAVLHVALRDTSSKEVLVDGHNVLPDVKHVLDRMAAFADGIRSGALKGATGRKITDIVNIGIGGSDLGPVMATLALAPYHDEPRAHFVSNIDGAHIADTLSPLDPASTLIIVASKTFTTIETMTNAQTARKWVADTLGEAAVGAHFAAVSTALDKVAAFGIPEDRVFGFWDWVGGRYSVWSAIGLPVMIAVGPDNFRKFLAGAHAMDVHFRDAPLEKNLPVMLGLIGYWHRAICGYGSRAIIPYDQRLSRLPAYLQQLDMESNGKSVTLDGKPVSGPTGPVVWGEPGTNGQHAFFQLLHQGTDTIPLEFIVAAKGHEPTLDHQHEMLMANCLAQSEALMKGRTLDEARAQLQAKNLPASQVERIAPHRVFSGNRPSLTLIHDMLDPYTLGRLIALYEHRVFVEAQIFGINAFDQWGVELGKELATELLPVVSGKEGASGRDASTQGLVAHLHARRKA</sequence>
<protein>
    <recommendedName>
        <fullName evidence="1">Glucose-6-phosphate isomerase</fullName>
        <shortName evidence="1">GPI</shortName>
        <ecNumber evidence="1">5.3.1.9</ecNumber>
    </recommendedName>
    <alternativeName>
        <fullName evidence="1">Phosphoglucose isomerase</fullName>
        <shortName evidence="1">PGI</shortName>
    </alternativeName>
    <alternativeName>
        <fullName evidence="1">Phosphohexose isomerase</fullName>
        <shortName evidence="1">PHI</shortName>
    </alternativeName>
</protein>
<comment type="function">
    <text evidence="1">Catalyzes the reversible isomerization of glucose-6-phosphate to fructose-6-phosphate.</text>
</comment>
<comment type="catalytic activity">
    <reaction evidence="1">
        <text>alpha-D-glucose 6-phosphate = beta-D-fructose 6-phosphate</text>
        <dbReference type="Rhea" id="RHEA:11816"/>
        <dbReference type="ChEBI" id="CHEBI:57634"/>
        <dbReference type="ChEBI" id="CHEBI:58225"/>
        <dbReference type="EC" id="5.3.1.9"/>
    </reaction>
</comment>
<comment type="pathway">
    <text evidence="1">Carbohydrate biosynthesis; gluconeogenesis.</text>
</comment>
<comment type="pathway">
    <text evidence="1">Carbohydrate degradation; glycolysis; D-glyceraldehyde 3-phosphate and glycerone phosphate from D-glucose: step 2/4.</text>
</comment>
<comment type="subcellular location">
    <subcellularLocation>
        <location evidence="1">Cytoplasm</location>
    </subcellularLocation>
</comment>
<comment type="similarity">
    <text evidence="1">Belongs to the GPI family.</text>
</comment>
<feature type="chain" id="PRO_0000180609" description="Glucose-6-phosphate isomerase">
    <location>
        <begin position="1"/>
        <end position="549"/>
    </location>
</feature>
<feature type="active site" description="Proton donor" evidence="1">
    <location>
        <position position="353"/>
    </location>
</feature>
<feature type="active site" evidence="1">
    <location>
        <position position="384"/>
    </location>
</feature>
<feature type="active site" evidence="1">
    <location>
        <position position="513"/>
    </location>
</feature>
<feature type="helix" evidence="2">
    <location>
        <begin position="5"/>
        <end position="21"/>
    </location>
</feature>
<feature type="helix" evidence="2">
    <location>
        <begin position="27"/>
        <end position="33"/>
    </location>
</feature>
<feature type="helix" evidence="2">
    <location>
        <begin position="37"/>
        <end position="40"/>
    </location>
</feature>
<feature type="strand" evidence="2">
    <location>
        <begin position="42"/>
        <end position="45"/>
    </location>
</feature>
<feature type="strand" evidence="2">
    <location>
        <begin position="48"/>
        <end position="51"/>
    </location>
</feature>
<feature type="helix" evidence="2">
    <location>
        <begin position="59"/>
        <end position="71"/>
    </location>
</feature>
<feature type="helix" evidence="2">
    <location>
        <begin position="74"/>
        <end position="82"/>
    </location>
</feature>
<feature type="turn" evidence="2">
    <location>
        <begin position="89"/>
        <end position="92"/>
    </location>
</feature>
<feature type="helix" evidence="2">
    <location>
        <begin position="97"/>
        <end position="101"/>
    </location>
</feature>
<feature type="helix" evidence="2">
    <location>
        <begin position="116"/>
        <end position="135"/>
    </location>
</feature>
<feature type="strand" evidence="2">
    <location>
        <begin position="136"/>
        <end position="139"/>
    </location>
</feature>
<feature type="strand" evidence="2">
    <location>
        <begin position="148"/>
        <end position="152"/>
    </location>
</feature>
<feature type="helix" evidence="2">
    <location>
        <begin position="155"/>
        <end position="157"/>
    </location>
</feature>
<feature type="helix" evidence="2">
    <location>
        <begin position="159"/>
        <end position="167"/>
    </location>
</feature>
<feature type="helix" evidence="2">
    <location>
        <begin position="169"/>
        <end position="171"/>
    </location>
</feature>
<feature type="strand" evidence="2">
    <location>
        <begin position="174"/>
        <end position="180"/>
    </location>
</feature>
<feature type="helix" evidence="2">
    <location>
        <begin position="185"/>
        <end position="192"/>
    </location>
</feature>
<feature type="helix" evidence="2">
    <location>
        <begin position="197"/>
        <end position="199"/>
    </location>
</feature>
<feature type="strand" evidence="2">
    <location>
        <begin position="200"/>
        <end position="205"/>
    </location>
</feature>
<feature type="strand" evidence="2">
    <location>
        <begin position="207"/>
        <end position="209"/>
    </location>
</feature>
<feature type="helix" evidence="2">
    <location>
        <begin position="212"/>
        <end position="229"/>
    </location>
</feature>
<feature type="helix" evidence="2">
    <location>
        <begin position="231"/>
        <end position="236"/>
    </location>
</feature>
<feature type="strand" evidence="2">
    <location>
        <begin position="238"/>
        <end position="241"/>
    </location>
</feature>
<feature type="helix" evidence="2">
    <location>
        <begin position="245"/>
        <end position="251"/>
    </location>
</feature>
<feature type="helix" evidence="2">
    <location>
        <begin position="255"/>
        <end position="257"/>
    </location>
</feature>
<feature type="helix" evidence="2">
    <location>
        <begin position="267"/>
        <end position="269"/>
    </location>
</feature>
<feature type="helix" evidence="2">
    <location>
        <begin position="274"/>
        <end position="276"/>
    </location>
</feature>
<feature type="helix" evidence="2">
    <location>
        <begin position="277"/>
        <end position="283"/>
    </location>
</feature>
<feature type="helix" evidence="2">
    <location>
        <begin position="285"/>
        <end position="304"/>
    </location>
</feature>
<feature type="helix" evidence="2">
    <location>
        <begin position="307"/>
        <end position="309"/>
    </location>
</feature>
<feature type="helix" evidence="2">
    <location>
        <begin position="311"/>
        <end position="324"/>
    </location>
</feature>
<feature type="strand" evidence="2">
    <location>
        <begin position="330"/>
        <end position="336"/>
    </location>
</feature>
<feature type="helix" evidence="2">
    <location>
        <begin position="338"/>
        <end position="340"/>
    </location>
</feature>
<feature type="helix" evidence="2">
    <location>
        <begin position="343"/>
        <end position="355"/>
    </location>
</feature>
<feature type="strand" evidence="2">
    <location>
        <begin position="373"/>
        <end position="375"/>
    </location>
</feature>
<feature type="helix" evidence="2">
    <location>
        <begin position="381"/>
        <end position="384"/>
    </location>
</feature>
<feature type="helix" evidence="2">
    <location>
        <begin position="387"/>
        <end position="392"/>
    </location>
</feature>
<feature type="strand" evidence="2">
    <location>
        <begin position="393"/>
        <end position="395"/>
    </location>
</feature>
<feature type="strand" evidence="2">
    <location>
        <begin position="399"/>
        <end position="406"/>
    </location>
</feature>
<feature type="helix" evidence="2">
    <location>
        <begin position="410"/>
        <end position="412"/>
    </location>
</feature>
<feature type="helix" evidence="2">
    <location>
        <begin position="413"/>
        <end position="432"/>
    </location>
</feature>
<feature type="helix" evidence="2">
    <location>
        <begin position="436"/>
        <end position="445"/>
    </location>
</feature>
<feature type="helix" evidence="2">
    <location>
        <begin position="450"/>
        <end position="456"/>
    </location>
</feature>
<feature type="helix" evidence="2">
    <location>
        <begin position="457"/>
        <end position="460"/>
    </location>
</feature>
<feature type="strand" evidence="2">
    <location>
        <begin position="468"/>
        <end position="474"/>
    </location>
</feature>
<feature type="helix" evidence="2">
    <location>
        <begin position="478"/>
        <end position="499"/>
    </location>
</feature>
<feature type="helix" evidence="2">
    <location>
        <begin position="507"/>
        <end position="509"/>
    </location>
</feature>
<feature type="helix" evidence="2">
    <location>
        <begin position="510"/>
        <end position="523"/>
    </location>
</feature>
<feature type="helix" evidence="2">
    <location>
        <begin position="534"/>
        <end position="547"/>
    </location>
</feature>
<keyword id="KW-0002">3D-structure</keyword>
<keyword id="KW-0963">Cytoplasm</keyword>
<keyword id="KW-0312">Gluconeogenesis</keyword>
<keyword id="KW-0324">Glycolysis</keyword>
<keyword id="KW-0413">Isomerase</keyword>
<gene>
    <name evidence="1" type="primary">pgi</name>
    <name type="ordered locus">BMEI1636</name>
</gene>
<reference key="1">
    <citation type="journal article" date="2002" name="Proc. Natl. Acad. Sci. U.S.A.">
        <title>The genome sequence of the facultative intracellular pathogen Brucella melitensis.</title>
        <authorList>
            <person name="DelVecchio V.G."/>
            <person name="Kapatral V."/>
            <person name="Redkar R.J."/>
            <person name="Patra G."/>
            <person name="Mujer C."/>
            <person name="Los T."/>
            <person name="Ivanova N."/>
            <person name="Anderson I."/>
            <person name="Bhattacharyya A."/>
            <person name="Lykidis A."/>
            <person name="Reznik G."/>
            <person name="Jablonski L."/>
            <person name="Larsen N."/>
            <person name="D'Souza M."/>
            <person name="Bernal A."/>
            <person name="Mazur M."/>
            <person name="Goltsman E."/>
            <person name="Selkov E."/>
            <person name="Elzer P.H."/>
            <person name="Hagius S."/>
            <person name="O'Callaghan D."/>
            <person name="Letesson J.-J."/>
            <person name="Haselkorn R."/>
            <person name="Kyrpides N.C."/>
            <person name="Overbeek R."/>
        </authorList>
    </citation>
    <scope>NUCLEOTIDE SEQUENCE [LARGE SCALE GENOMIC DNA]</scope>
    <source>
        <strain>ATCC 23456 / CCUG 17765 / NCTC 10094 / 16M</strain>
    </source>
</reference>
<evidence type="ECO:0000255" key="1">
    <source>
        <dbReference type="HAMAP-Rule" id="MF_00473"/>
    </source>
</evidence>
<evidence type="ECO:0007829" key="2">
    <source>
        <dbReference type="PDB" id="4EM6"/>
    </source>
</evidence>
<dbReference type="EC" id="5.3.1.9" evidence="1"/>
<dbReference type="EMBL" id="AE008917">
    <property type="protein sequence ID" value="AAL52817.1"/>
    <property type="molecule type" value="Genomic_DNA"/>
</dbReference>
<dbReference type="PIR" id="AF3456">
    <property type="entry name" value="AF3456"/>
</dbReference>
<dbReference type="RefSeq" id="WP_004682840.1">
    <property type="nucleotide sequence ID" value="NZ_GG703778.1"/>
</dbReference>
<dbReference type="PDB" id="4EM6">
    <property type="method" value="X-ray"/>
    <property type="resolution" value="1.90 A"/>
    <property type="chains" value="A/B/C/D=1-549"/>
</dbReference>
<dbReference type="PDBsum" id="4EM6"/>
<dbReference type="SMR" id="Q8YF86"/>
<dbReference type="GeneID" id="29594490"/>
<dbReference type="KEGG" id="bme:BMEI1636"/>
<dbReference type="KEGG" id="bmel:DK63_1855"/>
<dbReference type="PATRIC" id="fig|224914.52.peg.1954"/>
<dbReference type="eggNOG" id="COG0166">
    <property type="taxonomic scope" value="Bacteria"/>
</dbReference>
<dbReference type="PhylomeDB" id="Q8YF86"/>
<dbReference type="UniPathway" id="UPA00109">
    <property type="reaction ID" value="UER00181"/>
</dbReference>
<dbReference type="UniPathway" id="UPA00138"/>
<dbReference type="EvolutionaryTrace" id="Q8YF86"/>
<dbReference type="PRO" id="PR:Q8YF86"/>
<dbReference type="Proteomes" id="UP000000419">
    <property type="component" value="Chromosome I"/>
</dbReference>
<dbReference type="GO" id="GO:0005829">
    <property type="term" value="C:cytosol"/>
    <property type="evidence" value="ECO:0007669"/>
    <property type="project" value="TreeGrafter"/>
</dbReference>
<dbReference type="GO" id="GO:0097367">
    <property type="term" value="F:carbohydrate derivative binding"/>
    <property type="evidence" value="ECO:0007669"/>
    <property type="project" value="InterPro"/>
</dbReference>
<dbReference type="GO" id="GO:0004347">
    <property type="term" value="F:glucose-6-phosphate isomerase activity"/>
    <property type="evidence" value="ECO:0007669"/>
    <property type="project" value="UniProtKB-UniRule"/>
</dbReference>
<dbReference type="GO" id="GO:0048029">
    <property type="term" value="F:monosaccharide binding"/>
    <property type="evidence" value="ECO:0007669"/>
    <property type="project" value="TreeGrafter"/>
</dbReference>
<dbReference type="GO" id="GO:0006094">
    <property type="term" value="P:gluconeogenesis"/>
    <property type="evidence" value="ECO:0007669"/>
    <property type="project" value="UniProtKB-UniRule"/>
</dbReference>
<dbReference type="GO" id="GO:0051156">
    <property type="term" value="P:glucose 6-phosphate metabolic process"/>
    <property type="evidence" value="ECO:0007669"/>
    <property type="project" value="TreeGrafter"/>
</dbReference>
<dbReference type="GO" id="GO:0006096">
    <property type="term" value="P:glycolytic process"/>
    <property type="evidence" value="ECO:0007669"/>
    <property type="project" value="UniProtKB-UniRule"/>
</dbReference>
<dbReference type="CDD" id="cd05015">
    <property type="entry name" value="SIS_PGI_1"/>
    <property type="match status" value="1"/>
</dbReference>
<dbReference type="CDD" id="cd05016">
    <property type="entry name" value="SIS_PGI_2"/>
    <property type="match status" value="1"/>
</dbReference>
<dbReference type="FunFam" id="3.40.50.10490:FF:000018">
    <property type="entry name" value="Glucose-6-phosphate isomerase"/>
    <property type="match status" value="1"/>
</dbReference>
<dbReference type="Gene3D" id="1.10.1390.10">
    <property type="match status" value="1"/>
</dbReference>
<dbReference type="Gene3D" id="3.40.50.10490">
    <property type="entry name" value="Glucose-6-phosphate isomerase like protein, domain 1"/>
    <property type="match status" value="2"/>
</dbReference>
<dbReference type="HAMAP" id="MF_00473">
    <property type="entry name" value="G6P_isomerase"/>
    <property type="match status" value="1"/>
</dbReference>
<dbReference type="InterPro" id="IPR001672">
    <property type="entry name" value="G6P_Isomerase"/>
</dbReference>
<dbReference type="InterPro" id="IPR023096">
    <property type="entry name" value="G6P_Isomerase_C"/>
</dbReference>
<dbReference type="InterPro" id="IPR018189">
    <property type="entry name" value="Phosphoglucose_isomerase_CS"/>
</dbReference>
<dbReference type="InterPro" id="IPR046348">
    <property type="entry name" value="SIS_dom_sf"/>
</dbReference>
<dbReference type="InterPro" id="IPR035476">
    <property type="entry name" value="SIS_PGI_1"/>
</dbReference>
<dbReference type="InterPro" id="IPR035482">
    <property type="entry name" value="SIS_PGI_2"/>
</dbReference>
<dbReference type="NCBIfam" id="NF001211">
    <property type="entry name" value="PRK00179.1"/>
    <property type="match status" value="1"/>
</dbReference>
<dbReference type="PANTHER" id="PTHR11469">
    <property type="entry name" value="GLUCOSE-6-PHOSPHATE ISOMERASE"/>
    <property type="match status" value="1"/>
</dbReference>
<dbReference type="PANTHER" id="PTHR11469:SF1">
    <property type="entry name" value="GLUCOSE-6-PHOSPHATE ISOMERASE"/>
    <property type="match status" value="1"/>
</dbReference>
<dbReference type="Pfam" id="PF00342">
    <property type="entry name" value="PGI"/>
    <property type="match status" value="1"/>
</dbReference>
<dbReference type="PRINTS" id="PR00662">
    <property type="entry name" value="G6PISOMERASE"/>
</dbReference>
<dbReference type="SUPFAM" id="SSF53697">
    <property type="entry name" value="SIS domain"/>
    <property type="match status" value="1"/>
</dbReference>
<dbReference type="PROSITE" id="PS00765">
    <property type="entry name" value="P_GLUCOSE_ISOMERASE_1"/>
    <property type="match status" value="1"/>
</dbReference>
<dbReference type="PROSITE" id="PS00174">
    <property type="entry name" value="P_GLUCOSE_ISOMERASE_2"/>
    <property type="match status" value="1"/>
</dbReference>
<dbReference type="PROSITE" id="PS51463">
    <property type="entry name" value="P_GLUCOSE_ISOMERASE_3"/>
    <property type="match status" value="1"/>
</dbReference>
<accession>Q8YF86</accession>
<name>G6PI_BRUME</name>
<proteinExistence type="evidence at protein level"/>
<organism>
    <name type="scientific">Brucella melitensis biotype 1 (strain ATCC 23456 / CCUG 17765 / NCTC 10094 / 16M)</name>
    <dbReference type="NCBI Taxonomy" id="224914"/>
    <lineage>
        <taxon>Bacteria</taxon>
        <taxon>Pseudomonadati</taxon>
        <taxon>Pseudomonadota</taxon>
        <taxon>Alphaproteobacteria</taxon>
        <taxon>Hyphomicrobiales</taxon>
        <taxon>Brucellaceae</taxon>
        <taxon>Brucella/Ochrobactrum group</taxon>
        <taxon>Brucella</taxon>
    </lineage>
</organism>